<accession>P61378</accession>
<accession>Q8XG06</accession>
<organism>
    <name type="scientific">Salmonella typhimurium (strain LT2 / SGSC1412 / ATCC 700720)</name>
    <dbReference type="NCBI Taxonomy" id="99287"/>
    <lineage>
        <taxon>Bacteria</taxon>
        <taxon>Pseudomonadati</taxon>
        <taxon>Pseudomonadota</taxon>
        <taxon>Gammaproteobacteria</taxon>
        <taxon>Enterobacterales</taxon>
        <taxon>Enterobacteriaceae</taxon>
        <taxon>Salmonella</taxon>
    </lineage>
</organism>
<name>CCMA2_SALTY</name>
<keyword id="KW-0067">ATP-binding</keyword>
<keyword id="KW-0997">Cell inner membrane</keyword>
<keyword id="KW-1003">Cell membrane</keyword>
<keyword id="KW-0201">Cytochrome c-type biogenesis</keyword>
<keyword id="KW-0472">Membrane</keyword>
<keyword id="KW-0547">Nucleotide-binding</keyword>
<keyword id="KW-1185">Reference proteome</keyword>
<keyword id="KW-1278">Translocase</keyword>
<keyword id="KW-0813">Transport</keyword>
<gene>
    <name evidence="1" type="primary">ccmA2</name>
    <name type="ordered locus">STM2254</name>
</gene>
<evidence type="ECO:0000255" key="1">
    <source>
        <dbReference type="HAMAP-Rule" id="MF_01707"/>
    </source>
</evidence>
<proteinExistence type="inferred from homology"/>
<protein>
    <recommendedName>
        <fullName evidence="1">Cytochrome c biogenesis ATP-binding export protein CcmA 2</fullName>
        <ecNumber evidence="1">7.6.2.5</ecNumber>
    </recommendedName>
    <alternativeName>
        <fullName evidence="1">Heme exporter protein A 2</fullName>
    </alternativeName>
</protein>
<reference key="1">
    <citation type="journal article" date="2001" name="Nature">
        <title>Complete genome sequence of Salmonella enterica serovar Typhimurium LT2.</title>
        <authorList>
            <person name="McClelland M."/>
            <person name="Sanderson K.E."/>
            <person name="Spieth J."/>
            <person name="Clifton S.W."/>
            <person name="Latreille P."/>
            <person name="Courtney L."/>
            <person name="Porwollik S."/>
            <person name="Ali J."/>
            <person name="Dante M."/>
            <person name="Du F."/>
            <person name="Hou S."/>
            <person name="Layman D."/>
            <person name="Leonard S."/>
            <person name="Nguyen C."/>
            <person name="Scott K."/>
            <person name="Holmes A."/>
            <person name="Grewal N."/>
            <person name="Mulvaney E."/>
            <person name="Ryan E."/>
            <person name="Sun H."/>
            <person name="Florea L."/>
            <person name="Miller W."/>
            <person name="Stoneking T."/>
            <person name="Nhan M."/>
            <person name="Waterston R."/>
            <person name="Wilson R.K."/>
        </authorList>
    </citation>
    <scope>NUCLEOTIDE SEQUENCE [LARGE SCALE GENOMIC DNA]</scope>
    <source>
        <strain>LT2 / SGSC1412 / ATCC 700720</strain>
    </source>
</reference>
<comment type="function">
    <text evidence="1">Part of the ABC transporter complex CcmAB involved in the biogenesis of c-type cytochromes; once thought to export heme, this seems not to be the case, but its exact role is uncertain. Responsible for energy coupling to the transport system.</text>
</comment>
<comment type="catalytic activity">
    <reaction evidence="1">
        <text>heme b(in) + ATP + H2O = heme b(out) + ADP + phosphate + H(+)</text>
        <dbReference type="Rhea" id="RHEA:19261"/>
        <dbReference type="ChEBI" id="CHEBI:15377"/>
        <dbReference type="ChEBI" id="CHEBI:15378"/>
        <dbReference type="ChEBI" id="CHEBI:30616"/>
        <dbReference type="ChEBI" id="CHEBI:43474"/>
        <dbReference type="ChEBI" id="CHEBI:60344"/>
        <dbReference type="ChEBI" id="CHEBI:456216"/>
        <dbReference type="EC" id="7.6.2.5"/>
    </reaction>
</comment>
<comment type="subunit">
    <text evidence="1">The complex is composed of two ATP-binding proteins (CcmA) and two transmembrane proteins (CcmB).</text>
</comment>
<comment type="subcellular location">
    <subcellularLocation>
        <location evidence="1">Cell inner membrane</location>
        <topology evidence="1">Peripheral membrane protein</topology>
    </subcellularLocation>
</comment>
<comment type="similarity">
    <text evidence="1">Belongs to the ABC transporter superfamily. CcmA exporter (TC 3.A.1.107) family.</text>
</comment>
<sequence length="205" mass="22336">MLEARDLYCERDERTLFRGLSFTVEAGEWVQVTGGNGAGKTTLLRLLTGLARPDGGEVYWQGEPLRRVRDSFHRSLLWIGHQPGIKTRLTARENLHFFHPGDGARLPEALAQAGLAGFEDVPVAQLSAGQQRRVALARLWLTRAALWVLDEPFTAIDVNGVARLTRRMAAHTAQGGMVILTTHQPLPGAADTVRRLALTGGGAGL</sequence>
<feature type="chain" id="PRO_0000092213" description="Cytochrome c biogenesis ATP-binding export protein CcmA 2">
    <location>
        <begin position="1"/>
        <end position="205"/>
    </location>
</feature>
<feature type="domain" description="ABC transporter" evidence="1">
    <location>
        <begin position="2"/>
        <end position="205"/>
    </location>
</feature>
<feature type="binding site" evidence="1">
    <location>
        <begin position="34"/>
        <end position="41"/>
    </location>
    <ligand>
        <name>ATP</name>
        <dbReference type="ChEBI" id="CHEBI:30616"/>
    </ligand>
</feature>
<dbReference type="EC" id="7.6.2.5" evidence="1"/>
<dbReference type="EMBL" id="AE006468">
    <property type="protein sequence ID" value="AAL21156.1"/>
    <property type="molecule type" value="Genomic_DNA"/>
</dbReference>
<dbReference type="SMR" id="P61378"/>
<dbReference type="STRING" id="99287.STM2254"/>
<dbReference type="PaxDb" id="99287-STM2254"/>
<dbReference type="KEGG" id="stm:STM2254"/>
<dbReference type="PATRIC" id="fig|99287.12.peg.2388"/>
<dbReference type="HOGENOM" id="CLU_000604_1_2_6"/>
<dbReference type="OMA" id="NLAWLCA"/>
<dbReference type="PhylomeDB" id="P61378"/>
<dbReference type="BioCyc" id="SENT99287:STM2254-MONOMER"/>
<dbReference type="Proteomes" id="UP000001014">
    <property type="component" value="Chromosome"/>
</dbReference>
<dbReference type="GO" id="GO:0005886">
    <property type="term" value="C:plasma membrane"/>
    <property type="evidence" value="ECO:0007669"/>
    <property type="project" value="UniProtKB-SubCell"/>
</dbReference>
<dbReference type="GO" id="GO:0015439">
    <property type="term" value="F:ABC-type heme transporter activity"/>
    <property type="evidence" value="ECO:0007669"/>
    <property type="project" value="UniProtKB-EC"/>
</dbReference>
<dbReference type="GO" id="GO:0005524">
    <property type="term" value="F:ATP binding"/>
    <property type="evidence" value="ECO:0007669"/>
    <property type="project" value="UniProtKB-KW"/>
</dbReference>
<dbReference type="GO" id="GO:0016887">
    <property type="term" value="F:ATP hydrolysis activity"/>
    <property type="evidence" value="ECO:0007669"/>
    <property type="project" value="InterPro"/>
</dbReference>
<dbReference type="GO" id="GO:0017004">
    <property type="term" value="P:cytochrome complex assembly"/>
    <property type="evidence" value="ECO:0007669"/>
    <property type="project" value="UniProtKB-KW"/>
</dbReference>
<dbReference type="CDD" id="cd03231">
    <property type="entry name" value="ABC_CcmA_heme_exporter"/>
    <property type="match status" value="1"/>
</dbReference>
<dbReference type="Gene3D" id="3.40.50.300">
    <property type="entry name" value="P-loop containing nucleotide triphosphate hydrolases"/>
    <property type="match status" value="1"/>
</dbReference>
<dbReference type="InterPro" id="IPR003593">
    <property type="entry name" value="AAA+_ATPase"/>
</dbReference>
<dbReference type="InterPro" id="IPR003439">
    <property type="entry name" value="ABC_transporter-like_ATP-bd"/>
</dbReference>
<dbReference type="InterPro" id="IPR017871">
    <property type="entry name" value="ABC_transporter-like_CS"/>
</dbReference>
<dbReference type="InterPro" id="IPR005895">
    <property type="entry name" value="ABC_transptr_haem_export_CcmA"/>
</dbReference>
<dbReference type="InterPro" id="IPR027417">
    <property type="entry name" value="P-loop_NTPase"/>
</dbReference>
<dbReference type="NCBIfam" id="TIGR01189">
    <property type="entry name" value="ccmA"/>
    <property type="match status" value="1"/>
</dbReference>
<dbReference type="NCBIfam" id="NF010061">
    <property type="entry name" value="PRK13538.1"/>
    <property type="match status" value="1"/>
</dbReference>
<dbReference type="PANTHER" id="PTHR43499">
    <property type="entry name" value="ABC TRANSPORTER I FAMILY MEMBER 1"/>
    <property type="match status" value="1"/>
</dbReference>
<dbReference type="PANTHER" id="PTHR43499:SF1">
    <property type="entry name" value="ABC TRANSPORTER I FAMILY MEMBER 1"/>
    <property type="match status" value="1"/>
</dbReference>
<dbReference type="Pfam" id="PF00005">
    <property type="entry name" value="ABC_tran"/>
    <property type="match status" value="1"/>
</dbReference>
<dbReference type="SMART" id="SM00382">
    <property type="entry name" value="AAA"/>
    <property type="match status" value="1"/>
</dbReference>
<dbReference type="SUPFAM" id="SSF52540">
    <property type="entry name" value="P-loop containing nucleoside triphosphate hydrolases"/>
    <property type="match status" value="1"/>
</dbReference>
<dbReference type="PROSITE" id="PS00211">
    <property type="entry name" value="ABC_TRANSPORTER_1"/>
    <property type="match status" value="1"/>
</dbReference>
<dbReference type="PROSITE" id="PS50893">
    <property type="entry name" value="ABC_TRANSPORTER_2"/>
    <property type="match status" value="1"/>
</dbReference>
<dbReference type="PROSITE" id="PS51243">
    <property type="entry name" value="CCMA"/>
    <property type="match status" value="1"/>
</dbReference>